<protein>
    <recommendedName>
        <fullName evidence="1">Phosphopantetheine adenylyltransferase</fullName>
        <ecNumber evidence="1">2.7.7.3</ecNumber>
    </recommendedName>
    <alternativeName>
        <fullName evidence="1">Dephospho-CoA pyrophosphorylase</fullName>
    </alternativeName>
    <alternativeName>
        <fullName evidence="1">Pantetheine-phosphate adenylyltransferase</fullName>
        <shortName evidence="1">PPAT</shortName>
    </alternativeName>
</protein>
<sequence>MRVALFPGSFDPVTWGHIDLVKRASLIFDKVIVLVANNSAKNYLLSDVERYELTFEVIASLGWSKIFVDRYDGIILDYALKNDIGFIVRGVRAFHDFEFEFERYVVNNKLSPLVDTIFLPSSDRYLFVRSDLVKELIKNKNFDLSSFIPELVQKKLKSKFIDKLS</sequence>
<name>COAD_BORHD</name>
<evidence type="ECO:0000255" key="1">
    <source>
        <dbReference type="HAMAP-Rule" id="MF_00151"/>
    </source>
</evidence>
<organism>
    <name type="scientific">Borrelia hermsii (strain HS1 / DAH)</name>
    <dbReference type="NCBI Taxonomy" id="314723"/>
    <lineage>
        <taxon>Bacteria</taxon>
        <taxon>Pseudomonadati</taxon>
        <taxon>Spirochaetota</taxon>
        <taxon>Spirochaetia</taxon>
        <taxon>Spirochaetales</taxon>
        <taxon>Borreliaceae</taxon>
        <taxon>Borrelia</taxon>
    </lineage>
</organism>
<proteinExistence type="inferred from homology"/>
<keyword id="KW-0067">ATP-binding</keyword>
<keyword id="KW-0173">Coenzyme A biosynthesis</keyword>
<keyword id="KW-0963">Cytoplasm</keyword>
<keyword id="KW-0460">Magnesium</keyword>
<keyword id="KW-0547">Nucleotide-binding</keyword>
<keyword id="KW-0548">Nucleotidyltransferase</keyword>
<keyword id="KW-0808">Transferase</keyword>
<comment type="function">
    <text evidence="1">Reversibly transfers an adenylyl group from ATP to 4'-phosphopantetheine, yielding dephospho-CoA (dPCoA) and pyrophosphate.</text>
</comment>
<comment type="catalytic activity">
    <reaction evidence="1">
        <text>(R)-4'-phosphopantetheine + ATP + H(+) = 3'-dephospho-CoA + diphosphate</text>
        <dbReference type="Rhea" id="RHEA:19801"/>
        <dbReference type="ChEBI" id="CHEBI:15378"/>
        <dbReference type="ChEBI" id="CHEBI:30616"/>
        <dbReference type="ChEBI" id="CHEBI:33019"/>
        <dbReference type="ChEBI" id="CHEBI:57328"/>
        <dbReference type="ChEBI" id="CHEBI:61723"/>
        <dbReference type="EC" id="2.7.7.3"/>
    </reaction>
</comment>
<comment type="cofactor">
    <cofactor evidence="1">
        <name>Mg(2+)</name>
        <dbReference type="ChEBI" id="CHEBI:18420"/>
    </cofactor>
</comment>
<comment type="pathway">
    <text evidence="1">Cofactor biosynthesis; coenzyme A biosynthesis; CoA from (R)-pantothenate: step 4/5.</text>
</comment>
<comment type="subunit">
    <text evidence="1">Homohexamer.</text>
</comment>
<comment type="subcellular location">
    <subcellularLocation>
        <location evidence="1">Cytoplasm</location>
    </subcellularLocation>
</comment>
<comment type="similarity">
    <text evidence="1">Belongs to the bacterial CoaD family.</text>
</comment>
<accession>B2S145</accession>
<gene>
    <name evidence="1" type="primary">coaD</name>
    <name type="ordered locus">BH0702</name>
</gene>
<feature type="chain" id="PRO_1000096766" description="Phosphopantetheine adenylyltransferase">
    <location>
        <begin position="1"/>
        <end position="165"/>
    </location>
</feature>
<feature type="binding site" evidence="1">
    <location>
        <begin position="9"/>
        <end position="10"/>
    </location>
    <ligand>
        <name>ATP</name>
        <dbReference type="ChEBI" id="CHEBI:30616"/>
    </ligand>
</feature>
<feature type="binding site" evidence="1">
    <location>
        <position position="9"/>
    </location>
    <ligand>
        <name>substrate</name>
    </ligand>
</feature>
<feature type="binding site" evidence="1">
    <location>
        <position position="17"/>
    </location>
    <ligand>
        <name>ATP</name>
        <dbReference type="ChEBI" id="CHEBI:30616"/>
    </ligand>
</feature>
<feature type="binding site" evidence="1">
    <location>
        <position position="41"/>
    </location>
    <ligand>
        <name>substrate</name>
    </ligand>
</feature>
<feature type="binding site" evidence="1">
    <location>
        <position position="75"/>
    </location>
    <ligand>
        <name>substrate</name>
    </ligand>
</feature>
<feature type="binding site" evidence="1">
    <location>
        <position position="89"/>
    </location>
    <ligand>
        <name>substrate</name>
    </ligand>
</feature>
<feature type="binding site" evidence="1">
    <location>
        <begin position="90"/>
        <end position="92"/>
    </location>
    <ligand>
        <name>ATP</name>
        <dbReference type="ChEBI" id="CHEBI:30616"/>
    </ligand>
</feature>
<feature type="binding site" evidence="1">
    <location>
        <position position="100"/>
    </location>
    <ligand>
        <name>ATP</name>
        <dbReference type="ChEBI" id="CHEBI:30616"/>
    </ligand>
</feature>
<feature type="binding site" evidence="1">
    <location>
        <begin position="125"/>
        <end position="131"/>
    </location>
    <ligand>
        <name>ATP</name>
        <dbReference type="ChEBI" id="CHEBI:30616"/>
    </ligand>
</feature>
<feature type="site" description="Transition state stabilizer" evidence="1">
    <location>
        <position position="17"/>
    </location>
</feature>
<dbReference type="EC" id="2.7.7.3" evidence="1"/>
<dbReference type="EMBL" id="CP000048">
    <property type="protein sequence ID" value="AAX17201.1"/>
    <property type="molecule type" value="Genomic_DNA"/>
</dbReference>
<dbReference type="RefSeq" id="WP_012422451.1">
    <property type="nucleotide sequence ID" value="NZ_CP073136.1"/>
</dbReference>
<dbReference type="SMR" id="B2S145"/>
<dbReference type="GeneID" id="71843527"/>
<dbReference type="KEGG" id="bhr:BH0702"/>
<dbReference type="HOGENOM" id="CLU_100149_1_1_12"/>
<dbReference type="UniPathway" id="UPA00241">
    <property type="reaction ID" value="UER00355"/>
</dbReference>
<dbReference type="Proteomes" id="UP000008834">
    <property type="component" value="Chromosome"/>
</dbReference>
<dbReference type="GO" id="GO:0005737">
    <property type="term" value="C:cytoplasm"/>
    <property type="evidence" value="ECO:0007669"/>
    <property type="project" value="UniProtKB-SubCell"/>
</dbReference>
<dbReference type="GO" id="GO:0005524">
    <property type="term" value="F:ATP binding"/>
    <property type="evidence" value="ECO:0007669"/>
    <property type="project" value="UniProtKB-KW"/>
</dbReference>
<dbReference type="GO" id="GO:0004595">
    <property type="term" value="F:pantetheine-phosphate adenylyltransferase activity"/>
    <property type="evidence" value="ECO:0007669"/>
    <property type="project" value="UniProtKB-UniRule"/>
</dbReference>
<dbReference type="GO" id="GO:0015937">
    <property type="term" value="P:coenzyme A biosynthetic process"/>
    <property type="evidence" value="ECO:0007669"/>
    <property type="project" value="UniProtKB-UniRule"/>
</dbReference>
<dbReference type="Gene3D" id="3.40.50.620">
    <property type="entry name" value="HUPs"/>
    <property type="match status" value="1"/>
</dbReference>
<dbReference type="HAMAP" id="MF_00151">
    <property type="entry name" value="PPAT_bact"/>
    <property type="match status" value="1"/>
</dbReference>
<dbReference type="InterPro" id="IPR004821">
    <property type="entry name" value="Cyt_trans-like"/>
</dbReference>
<dbReference type="InterPro" id="IPR001980">
    <property type="entry name" value="PPAT"/>
</dbReference>
<dbReference type="InterPro" id="IPR014729">
    <property type="entry name" value="Rossmann-like_a/b/a_fold"/>
</dbReference>
<dbReference type="NCBIfam" id="TIGR01510">
    <property type="entry name" value="coaD_prev_kdtB"/>
    <property type="match status" value="1"/>
</dbReference>
<dbReference type="NCBIfam" id="TIGR00125">
    <property type="entry name" value="cyt_tran_rel"/>
    <property type="match status" value="1"/>
</dbReference>
<dbReference type="PANTHER" id="PTHR21342">
    <property type="entry name" value="PHOSPHOPANTETHEINE ADENYLYLTRANSFERASE"/>
    <property type="match status" value="1"/>
</dbReference>
<dbReference type="PANTHER" id="PTHR21342:SF1">
    <property type="entry name" value="PHOSPHOPANTETHEINE ADENYLYLTRANSFERASE"/>
    <property type="match status" value="1"/>
</dbReference>
<dbReference type="Pfam" id="PF01467">
    <property type="entry name" value="CTP_transf_like"/>
    <property type="match status" value="1"/>
</dbReference>
<dbReference type="PRINTS" id="PR01020">
    <property type="entry name" value="LPSBIOSNTHSS"/>
</dbReference>
<dbReference type="SUPFAM" id="SSF52374">
    <property type="entry name" value="Nucleotidylyl transferase"/>
    <property type="match status" value="1"/>
</dbReference>
<reference key="1">
    <citation type="submission" date="2004-12" db="EMBL/GenBank/DDBJ databases">
        <title>The genome sequence of Borrelia hermsii and Borrelia turicatae: comparative analysis of two agents of endemic N. America relapsing fever.</title>
        <authorList>
            <person name="Porcella S.F."/>
            <person name="Raffel S.J."/>
            <person name="Schrumpf M.E."/>
            <person name="Montgomery B."/>
            <person name="Smith T."/>
            <person name="Schwan T.G."/>
        </authorList>
    </citation>
    <scope>NUCLEOTIDE SEQUENCE [LARGE SCALE GENOMIC DNA]</scope>
    <source>
        <strain>HS1 / DAH</strain>
    </source>
</reference>